<sequence length="332" mass="38412">MGGEQEEERFDGMLLAMAQQHEGGVQELVNTFFSFLRRKTDFFIGGEEGMAEKLITQTFNHHNQLAQKARREKRARQETERREKAERAARLAKEAKAETPGPQIKELTDEEAERLQLEIDQKKDAENHEVQLKNGSLDSPGKQDAEEEEDEEDEKDKGKLKPNLGNGADLPNYRWTQTLSELDLAVPFRVSFRLKGKDVVVDIQRRHLRVGLKGQAPVIDGELYNEVKVEESSWLIEDGKVVTVHLEKINKMEWWNRLVTSDPEINTKKINPENSKLSDLDSETRSMVEKMMYDQRQKSMGLPTSDEQKKQEILKKFMDQHPEMDFSKAKFN</sequence>
<comment type="function">
    <text evidence="2 3">Plays a role in neurogenesis and neuronal migration. Necessary for correct formation of mitotic spindles and chromosome separation during mitosis (By similarity). Necessary for cytokinesis and cell proliferation (By similarity).</text>
</comment>
<comment type="subunit">
    <text evidence="3 8">Interacts with PAFAH1B1 (PubMed:9601647). Interacts with PLK1 and DCDC1. Part of a complex containing PLK1, NUDC, dynein and dynactin (By similarity). Interacts with EML4 (via WD repeats) (By similarity).</text>
</comment>
<comment type="subcellular location">
    <subcellularLocation>
        <location evidence="1">Cytoplasm</location>
        <location evidence="1">Cytoskeleton</location>
    </subcellularLocation>
    <subcellularLocation>
        <location evidence="1">Nucleus</location>
    </subcellularLocation>
    <subcellularLocation>
        <location evidence="3">Cytoplasm</location>
        <location evidence="3">Cytoskeleton</location>
        <location evidence="3">Spindle</location>
    </subcellularLocation>
    <subcellularLocation>
        <location evidence="3">Midbody</location>
    </subcellularLocation>
    <text evidence="3">A small proportion is nuclear, in a punctate pattern (By similarity). In a filamentous pattern adjacent to the nucleus of migrating cerebellar granule cells. Colocalizes with tubulin and dynein and with the microtubule organizing center (By similarity). Distributed throughout the cytoplasm of non-migrating cells (By similarity).</text>
</comment>
<comment type="tissue specificity">
    <text evidence="7">Ubiquitous. Detected in stomach, small intestine, spleen, liver, kidney, brain, heart and lung.</text>
</comment>
<comment type="induction">
    <text evidence="7">Up-regulated by prolactin in T-cell lymphoma. Maximum level of expression occurs at the G1/S phase transition of the cell cycle.</text>
</comment>
<comment type="PTM">
    <text evidence="3">Reversibly phosphorylated on serine residues during the M phase of the cell cycle. Phosphorylation on Ser-275 and Ser-327 is necessary for correct formation of mitotic spindles and chromosome separation during mitosis. Phosphorylated by PLK and other kinases (By similarity).</text>
</comment>
<comment type="similarity">
    <text evidence="9">Belongs to the nudC family.</text>
</comment>
<dbReference type="EMBL" id="X82445">
    <property type="protein sequence ID" value="CAA57825.1"/>
    <property type="molecule type" value="mRNA"/>
</dbReference>
<dbReference type="EMBL" id="BC065581">
    <property type="protein sequence ID" value="AAH65581.1"/>
    <property type="molecule type" value="mRNA"/>
</dbReference>
<dbReference type="PIR" id="A55897">
    <property type="entry name" value="A55897"/>
</dbReference>
<dbReference type="RefSeq" id="NP_058967.1">
    <property type="nucleotide sequence ID" value="NM_017271.3"/>
</dbReference>
<dbReference type="SMR" id="Q63525"/>
<dbReference type="BioGRID" id="248270">
    <property type="interactions" value="1"/>
</dbReference>
<dbReference type="FunCoup" id="Q63525">
    <property type="interactions" value="3513"/>
</dbReference>
<dbReference type="STRING" id="10116.ENSRNOP00000073414"/>
<dbReference type="iPTMnet" id="Q63525"/>
<dbReference type="PhosphoSitePlus" id="Q63525"/>
<dbReference type="jPOST" id="Q63525"/>
<dbReference type="PaxDb" id="10116-ENSRNOP00000009933"/>
<dbReference type="Ensembl" id="ENSRNOT00000079380.2">
    <property type="protein sequence ID" value="ENSRNOP00000073414.1"/>
    <property type="gene ID" value="ENSRNOG00000051720.2"/>
</dbReference>
<dbReference type="GeneID" id="29648"/>
<dbReference type="KEGG" id="rno:29648"/>
<dbReference type="UCSC" id="RGD:3215">
    <property type="organism name" value="rat"/>
</dbReference>
<dbReference type="AGR" id="RGD:3215"/>
<dbReference type="CTD" id="10726"/>
<dbReference type="RGD" id="3215">
    <property type="gene designation" value="Nudc"/>
</dbReference>
<dbReference type="eggNOG" id="KOG2265">
    <property type="taxonomic scope" value="Eukaryota"/>
</dbReference>
<dbReference type="GeneTree" id="ENSGT00940000155361"/>
<dbReference type="HOGENOM" id="CLU_047332_1_0_1"/>
<dbReference type="InParanoid" id="Q63525"/>
<dbReference type="OMA" id="NQMEWWS"/>
<dbReference type="OrthoDB" id="416217at2759"/>
<dbReference type="PhylomeDB" id="Q63525"/>
<dbReference type="TreeFam" id="TF300147"/>
<dbReference type="Reactome" id="R-RNO-141444">
    <property type="pathway name" value="Amplification of signal from unattached kinetochores via a MAD2 inhibitory signal"/>
</dbReference>
<dbReference type="Reactome" id="R-RNO-2467813">
    <property type="pathway name" value="Separation of Sister Chromatids"/>
</dbReference>
<dbReference type="Reactome" id="R-RNO-2500257">
    <property type="pathway name" value="Resolution of Sister Chromatid Cohesion"/>
</dbReference>
<dbReference type="Reactome" id="R-RNO-5663220">
    <property type="pathway name" value="RHO GTPases Activate Formins"/>
</dbReference>
<dbReference type="Reactome" id="R-RNO-68877">
    <property type="pathway name" value="Mitotic Prometaphase"/>
</dbReference>
<dbReference type="Reactome" id="R-RNO-9648025">
    <property type="pathway name" value="EML4 and NUDC in mitotic spindle formation"/>
</dbReference>
<dbReference type="Reactome" id="R-RNO-9696270">
    <property type="pathway name" value="RND2 GTPase cycle"/>
</dbReference>
<dbReference type="PRO" id="PR:Q63525"/>
<dbReference type="Proteomes" id="UP000002494">
    <property type="component" value="Chromosome 5"/>
</dbReference>
<dbReference type="Bgee" id="ENSRNOG00000051720">
    <property type="expression patterns" value="Expressed in ovary and 19 other cell types or tissues"/>
</dbReference>
<dbReference type="GO" id="GO:0005737">
    <property type="term" value="C:cytoplasm"/>
    <property type="evidence" value="ECO:0000318"/>
    <property type="project" value="GO_Central"/>
</dbReference>
<dbReference type="GO" id="GO:0005829">
    <property type="term" value="C:cytosol"/>
    <property type="evidence" value="ECO:0007669"/>
    <property type="project" value="Ensembl"/>
</dbReference>
<dbReference type="GO" id="GO:0005874">
    <property type="term" value="C:microtubule"/>
    <property type="evidence" value="ECO:0007669"/>
    <property type="project" value="UniProtKB-KW"/>
</dbReference>
<dbReference type="GO" id="GO:0030496">
    <property type="term" value="C:midbody"/>
    <property type="evidence" value="ECO:0000250"/>
    <property type="project" value="UniProtKB"/>
</dbReference>
<dbReference type="GO" id="GO:0072686">
    <property type="term" value="C:mitotic spindle"/>
    <property type="evidence" value="ECO:0000250"/>
    <property type="project" value="UniProtKB"/>
</dbReference>
<dbReference type="GO" id="GO:0005634">
    <property type="term" value="C:nucleus"/>
    <property type="evidence" value="ECO:0007669"/>
    <property type="project" value="UniProtKB-SubCell"/>
</dbReference>
<dbReference type="GO" id="GO:0051082">
    <property type="term" value="F:unfolded protein binding"/>
    <property type="evidence" value="ECO:0000318"/>
    <property type="project" value="GO_Central"/>
</dbReference>
<dbReference type="GO" id="GO:0051301">
    <property type="term" value="P:cell division"/>
    <property type="evidence" value="ECO:0007669"/>
    <property type="project" value="UniProtKB-KW"/>
</dbReference>
<dbReference type="GO" id="GO:0007080">
    <property type="term" value="P:mitotic metaphase chromosome alignment"/>
    <property type="evidence" value="ECO:0000250"/>
    <property type="project" value="UniProtKB"/>
</dbReference>
<dbReference type="GO" id="GO:0007052">
    <property type="term" value="P:mitotic spindle organization"/>
    <property type="evidence" value="ECO:0000250"/>
    <property type="project" value="UniProtKB"/>
</dbReference>
<dbReference type="GO" id="GO:0007097">
    <property type="term" value="P:nuclear migration"/>
    <property type="evidence" value="ECO:0000315"/>
    <property type="project" value="RGD"/>
</dbReference>
<dbReference type="GO" id="GO:0006457">
    <property type="term" value="P:protein folding"/>
    <property type="evidence" value="ECO:0000318"/>
    <property type="project" value="GO_Central"/>
</dbReference>
<dbReference type="GO" id="GO:0043434">
    <property type="term" value="P:response to peptide hormone"/>
    <property type="evidence" value="ECO:0000270"/>
    <property type="project" value="RGD"/>
</dbReference>
<dbReference type="CDD" id="cd06492">
    <property type="entry name" value="p23_mNUDC_like"/>
    <property type="match status" value="1"/>
</dbReference>
<dbReference type="FunFam" id="2.60.40.790:FF:000001">
    <property type="entry name" value="Nuclear migration protein nudC"/>
    <property type="match status" value="1"/>
</dbReference>
<dbReference type="Gene3D" id="2.60.40.790">
    <property type="match status" value="1"/>
</dbReference>
<dbReference type="InterPro" id="IPR007052">
    <property type="entry name" value="CS_dom"/>
</dbReference>
<dbReference type="InterPro" id="IPR008978">
    <property type="entry name" value="HSP20-like_chaperone"/>
</dbReference>
<dbReference type="InterPro" id="IPR032572">
    <property type="entry name" value="NuDC"/>
</dbReference>
<dbReference type="InterPro" id="IPR037898">
    <property type="entry name" value="NudC_fam"/>
</dbReference>
<dbReference type="InterPro" id="IPR025934">
    <property type="entry name" value="NudC_N_dom"/>
</dbReference>
<dbReference type="PANTHER" id="PTHR12356:SF3">
    <property type="entry name" value="NUCLEAR MIGRATION PROTEIN NUDC"/>
    <property type="match status" value="1"/>
</dbReference>
<dbReference type="PANTHER" id="PTHR12356">
    <property type="entry name" value="NUCLEAR MOVEMENT PROTEIN NUDC"/>
    <property type="match status" value="1"/>
</dbReference>
<dbReference type="Pfam" id="PF04969">
    <property type="entry name" value="CS"/>
    <property type="match status" value="1"/>
</dbReference>
<dbReference type="Pfam" id="PF16273">
    <property type="entry name" value="NuDC"/>
    <property type="match status" value="1"/>
</dbReference>
<dbReference type="Pfam" id="PF14050">
    <property type="entry name" value="Nudc_N"/>
    <property type="match status" value="1"/>
</dbReference>
<dbReference type="SUPFAM" id="SSF49764">
    <property type="entry name" value="HSP20-like chaperones"/>
    <property type="match status" value="1"/>
</dbReference>
<dbReference type="PROSITE" id="PS51203">
    <property type="entry name" value="CS"/>
    <property type="match status" value="1"/>
</dbReference>
<organism>
    <name type="scientific">Rattus norvegicus</name>
    <name type="common">Rat</name>
    <dbReference type="NCBI Taxonomy" id="10116"/>
    <lineage>
        <taxon>Eukaryota</taxon>
        <taxon>Metazoa</taxon>
        <taxon>Chordata</taxon>
        <taxon>Craniata</taxon>
        <taxon>Vertebrata</taxon>
        <taxon>Euteleostomi</taxon>
        <taxon>Mammalia</taxon>
        <taxon>Eutheria</taxon>
        <taxon>Euarchontoglires</taxon>
        <taxon>Glires</taxon>
        <taxon>Rodentia</taxon>
        <taxon>Myomorpha</taxon>
        <taxon>Muroidea</taxon>
        <taxon>Muridae</taxon>
        <taxon>Murinae</taxon>
        <taxon>Rattus</taxon>
    </lineage>
</organism>
<accession>Q63525</accession>
<evidence type="ECO:0000250" key="1"/>
<evidence type="ECO:0000250" key="2">
    <source>
        <dbReference type="UniProtKB" id="O35685"/>
    </source>
</evidence>
<evidence type="ECO:0000250" key="3">
    <source>
        <dbReference type="UniProtKB" id="Q9Y266"/>
    </source>
</evidence>
<evidence type="ECO:0000255" key="4"/>
<evidence type="ECO:0000255" key="5">
    <source>
        <dbReference type="PROSITE-ProRule" id="PRU00547"/>
    </source>
</evidence>
<evidence type="ECO:0000256" key="6">
    <source>
        <dbReference type="SAM" id="MobiDB-lite"/>
    </source>
</evidence>
<evidence type="ECO:0000269" key="7">
    <source>
    </source>
</evidence>
<evidence type="ECO:0000269" key="8">
    <source>
    </source>
</evidence>
<evidence type="ECO:0000305" key="9"/>
<name>NUDC_RAT</name>
<gene>
    <name type="primary">Nudc</name>
</gene>
<keyword id="KW-0007">Acetylation</keyword>
<keyword id="KW-0131">Cell cycle</keyword>
<keyword id="KW-0132">Cell division</keyword>
<keyword id="KW-0175">Coiled coil</keyword>
<keyword id="KW-0963">Cytoplasm</keyword>
<keyword id="KW-0206">Cytoskeleton</keyword>
<keyword id="KW-0493">Microtubule</keyword>
<keyword id="KW-0498">Mitosis</keyword>
<keyword id="KW-0539">Nucleus</keyword>
<keyword id="KW-0597">Phosphoprotein</keyword>
<keyword id="KW-1185">Reference proteome</keyword>
<proteinExistence type="evidence at protein level"/>
<reference key="1">
    <citation type="journal article" date="1995" name="Mol. Endocrinol.">
        <title>Characterization of a prolactin-inducible gene, clone 15, in T cells.</title>
        <authorList>
            <person name="Axtell S.M."/>
            <person name="Truong T.M."/>
            <person name="O'Neal K.D."/>
            <person name="Yu-Lee L.-Y."/>
        </authorList>
    </citation>
    <scope>NUCLEOTIDE SEQUENCE [MRNA]</scope>
    <scope>INDUCTION</scope>
    <scope>TISSUE SPECIFICITY</scope>
    <source>
        <strain>Noble</strain>
    </source>
</reference>
<reference key="2">
    <citation type="journal article" date="2004" name="Genome Res.">
        <title>The status, quality, and expansion of the NIH full-length cDNA project: the Mammalian Gene Collection (MGC).</title>
        <authorList>
            <consortium name="The MGC Project Team"/>
        </authorList>
    </citation>
    <scope>NUCLEOTIDE SEQUENCE [LARGE SCALE MRNA]</scope>
    <source>
        <tissue>Prostate</tissue>
    </source>
</reference>
<reference key="3">
    <citation type="journal article" date="1998" name="Curr. Biol.">
        <title>The lissenchephaly gene product Lis1, a protein involved in neuronal migration, interacts with a nuclear movement protein, NudC.</title>
        <authorList>
            <person name="Morris S.M."/>
            <person name="Albrecht U."/>
            <person name="Reiner O."/>
            <person name="Eichele G."/>
            <person name="Yu-Lee L.-Y."/>
        </authorList>
    </citation>
    <scope>INTERACTION WITH PAFAH1B1</scope>
</reference>
<feature type="chain" id="PRO_0000057992" description="Nuclear migration protein nudC">
    <location>
        <begin position="1"/>
        <end position="332"/>
    </location>
</feature>
<feature type="domain" description="CS" evidence="5">
    <location>
        <begin position="168"/>
        <end position="259"/>
    </location>
</feature>
<feature type="region of interest" description="Disordered" evidence="6">
    <location>
        <begin position="65"/>
        <end position="108"/>
    </location>
</feature>
<feature type="region of interest" description="Disordered" evidence="6">
    <location>
        <begin position="121"/>
        <end position="172"/>
    </location>
</feature>
<feature type="region of interest" description="Interaction with EML4" evidence="3">
    <location>
        <begin position="174"/>
        <end position="332"/>
    </location>
</feature>
<feature type="coiled-coil region" evidence="4">
    <location>
        <begin position="60"/>
        <end position="129"/>
    </location>
</feature>
<feature type="short sequence motif" description="Nuclear localization signal" evidence="4">
    <location>
        <begin position="68"/>
        <end position="74"/>
    </location>
</feature>
<feature type="compositionally biased region" description="Basic and acidic residues" evidence="6">
    <location>
        <begin position="75"/>
        <end position="97"/>
    </location>
</feature>
<feature type="compositionally biased region" description="Basic and acidic residues" evidence="6">
    <location>
        <begin position="121"/>
        <end position="131"/>
    </location>
</feature>
<feature type="compositionally biased region" description="Acidic residues" evidence="6">
    <location>
        <begin position="145"/>
        <end position="154"/>
    </location>
</feature>
<feature type="modified residue" description="Phosphothreonine" evidence="3">
    <location>
        <position position="108"/>
    </location>
</feature>
<feature type="modified residue" description="Phosphoserine" evidence="3">
    <location>
        <position position="136"/>
    </location>
</feature>
<feature type="modified residue" description="Phosphoserine" evidence="3">
    <location>
        <position position="139"/>
    </location>
</feature>
<feature type="modified residue" description="N6-acetyllysine" evidence="3">
    <location>
        <position position="240"/>
    </location>
</feature>
<feature type="modified residue" description="Phosphoserine" evidence="3">
    <location>
        <position position="261"/>
    </location>
</feature>
<feature type="modified residue" description="Phosphoserine" evidence="3">
    <location>
        <position position="275"/>
    </location>
</feature>
<feature type="modified residue" description="Phosphoserine" evidence="3">
    <location>
        <position position="278"/>
    </location>
</feature>
<feature type="modified residue" description="Phosphoserine" evidence="3">
    <location>
        <position position="286"/>
    </location>
</feature>
<feature type="modified residue" description="Phosphoserine" evidence="3">
    <location>
        <position position="299"/>
    </location>
</feature>
<feature type="modified residue" description="Phosphoserine" evidence="3">
    <location>
        <position position="327"/>
    </location>
</feature>
<protein>
    <recommendedName>
        <fullName>Nuclear migration protein nudC</fullName>
    </recommendedName>
    <alternativeName>
        <fullName>Nuclear distribution protein C homolog</fullName>
    </alternativeName>
    <alternativeName>
        <fullName>c15</fullName>
    </alternativeName>
</protein>